<dbReference type="EMBL" id="BA000001">
    <property type="protein sequence ID" value="BAA30131.1"/>
    <property type="molecule type" value="Genomic_DNA"/>
</dbReference>
<dbReference type="PIR" id="E71096">
    <property type="entry name" value="E71096"/>
</dbReference>
<dbReference type="RefSeq" id="WP_010885121.1">
    <property type="nucleotide sequence ID" value="NC_000961.1"/>
</dbReference>
<dbReference type="PDB" id="1WMM">
    <property type="method" value="X-ray"/>
    <property type="resolution" value="2.20 A"/>
    <property type="chains" value="A=1-145"/>
</dbReference>
<dbReference type="PDB" id="2HD9">
    <property type="method" value="X-ray"/>
    <property type="resolution" value="1.35 A"/>
    <property type="chains" value="A=1-145"/>
</dbReference>
<dbReference type="PDB" id="2ZBN">
    <property type="method" value="X-ray"/>
    <property type="resolution" value="2.00 A"/>
    <property type="chains" value="A=1-145"/>
</dbReference>
<dbReference type="PDBsum" id="1WMM"/>
<dbReference type="PDBsum" id="2HD9"/>
<dbReference type="PDBsum" id="2ZBN"/>
<dbReference type="SMR" id="O58764"/>
<dbReference type="STRING" id="70601.gene:9377991"/>
<dbReference type="EnsemblBacteria" id="BAA30131">
    <property type="protein sequence ID" value="BAA30131"/>
    <property type="gene ID" value="BAA30131"/>
</dbReference>
<dbReference type="GeneID" id="1443356"/>
<dbReference type="KEGG" id="pho:PH1033"/>
<dbReference type="eggNOG" id="arCOG02727">
    <property type="taxonomic scope" value="Archaea"/>
</dbReference>
<dbReference type="OrthoDB" id="35872at2157"/>
<dbReference type="EvolutionaryTrace" id="O58764"/>
<dbReference type="Proteomes" id="UP000000752">
    <property type="component" value="Chromosome"/>
</dbReference>
<dbReference type="CDD" id="cd21132">
    <property type="entry name" value="EVE-like"/>
    <property type="match status" value="1"/>
</dbReference>
<dbReference type="Gene3D" id="3.10.590.10">
    <property type="entry name" value="ph1033 like domains"/>
    <property type="match status" value="1"/>
</dbReference>
<dbReference type="HAMAP" id="MF_00771">
    <property type="entry name" value="UPF0310"/>
    <property type="match status" value="1"/>
</dbReference>
<dbReference type="InterPro" id="IPR002740">
    <property type="entry name" value="EVE_domain"/>
</dbReference>
<dbReference type="InterPro" id="IPR015947">
    <property type="entry name" value="PUA-like_sf"/>
</dbReference>
<dbReference type="InterPro" id="IPR022996">
    <property type="entry name" value="UPF0310"/>
</dbReference>
<dbReference type="NCBIfam" id="NF002008">
    <property type="entry name" value="PRK00809.1"/>
    <property type="match status" value="1"/>
</dbReference>
<dbReference type="PANTHER" id="PTHR39661">
    <property type="entry name" value="UPF0310 PROTEIN MJECL36"/>
    <property type="match status" value="1"/>
</dbReference>
<dbReference type="PANTHER" id="PTHR39661:SF1">
    <property type="entry name" value="UPF0310 PROTEIN MJECL36"/>
    <property type="match status" value="1"/>
</dbReference>
<dbReference type="Pfam" id="PF01878">
    <property type="entry name" value="EVE"/>
    <property type="match status" value="1"/>
</dbReference>
<dbReference type="SUPFAM" id="SSF88697">
    <property type="entry name" value="PUA domain-like"/>
    <property type="match status" value="1"/>
</dbReference>
<feature type="chain" id="PRO_0000059638" description="UPF0310 protein PH1033">
    <location>
        <begin position="1"/>
        <end position="145"/>
    </location>
</feature>
<feature type="strand" evidence="2">
    <location>
        <begin position="3"/>
        <end position="8"/>
    </location>
</feature>
<feature type="helix" evidence="2">
    <location>
        <begin position="10"/>
        <end position="19"/>
    </location>
</feature>
<feature type="strand" evidence="2">
    <location>
        <begin position="21"/>
        <end position="24"/>
    </location>
</feature>
<feature type="helix" evidence="2">
    <location>
        <begin position="26"/>
        <end position="28"/>
    </location>
</feature>
<feature type="helix" evidence="2">
    <location>
        <begin position="29"/>
        <end position="32"/>
    </location>
</feature>
<feature type="strand" evidence="2">
    <location>
        <begin position="40"/>
        <end position="45"/>
    </location>
</feature>
<feature type="strand" evidence="2">
    <location>
        <begin position="59"/>
        <end position="66"/>
    </location>
</feature>
<feature type="strand" evidence="2">
    <location>
        <begin position="90"/>
        <end position="104"/>
    </location>
</feature>
<feature type="helix" evidence="2">
    <location>
        <begin position="105"/>
        <end position="110"/>
    </location>
</feature>
<feature type="helix" evidence="2">
    <location>
        <begin position="120"/>
        <end position="123"/>
    </location>
</feature>
<feature type="turn" evidence="2">
    <location>
        <begin position="124"/>
        <end position="126"/>
    </location>
</feature>
<feature type="strand" evidence="2">
    <location>
        <begin position="128"/>
        <end position="132"/>
    </location>
</feature>
<feature type="helix" evidence="2">
    <location>
        <begin position="134"/>
        <end position="143"/>
    </location>
</feature>
<keyword id="KW-0002">3D-structure</keyword>
<accession>O58764</accession>
<proteinExistence type="evidence at protein level"/>
<comment type="similarity">
    <text evidence="1">Belongs to the UPF0310 family.</text>
</comment>
<gene>
    <name type="ordered locus">PH1033</name>
</gene>
<name>Y1033_PYRHO</name>
<sequence>MTYWICITNRENWEVIKRHNVWGVPKKHKNTLSRVKPGDKLVIYVRQEKDKEGNLLEPKIVGIYEVTSEPYVDFSRIFKPHRGGKETYPYRVKIKPIKIGEINFKPLINDLKFIKNKKRWSMHFFGKAMRELPEEDYKLIEKLLL</sequence>
<protein>
    <recommendedName>
        <fullName evidence="1">UPF0310 protein PH1033</fullName>
    </recommendedName>
</protein>
<reference key="1">
    <citation type="journal article" date="1998" name="DNA Res.">
        <title>Complete sequence and gene organization of the genome of a hyper-thermophilic archaebacterium, Pyrococcus horikoshii OT3.</title>
        <authorList>
            <person name="Kawarabayasi Y."/>
            <person name="Sawada M."/>
            <person name="Horikawa H."/>
            <person name="Haikawa Y."/>
            <person name="Hino Y."/>
            <person name="Yamamoto S."/>
            <person name="Sekine M."/>
            <person name="Baba S."/>
            <person name="Kosugi H."/>
            <person name="Hosoyama A."/>
            <person name="Nagai Y."/>
            <person name="Sakai M."/>
            <person name="Ogura K."/>
            <person name="Otsuka R."/>
            <person name="Nakazawa H."/>
            <person name="Takamiya M."/>
            <person name="Ohfuku Y."/>
            <person name="Funahashi T."/>
            <person name="Tanaka T."/>
            <person name="Kudoh Y."/>
            <person name="Yamazaki J."/>
            <person name="Kushida N."/>
            <person name="Oguchi A."/>
            <person name="Aoki K."/>
            <person name="Yoshizawa T."/>
            <person name="Nakamura Y."/>
            <person name="Robb F.T."/>
            <person name="Horikoshi K."/>
            <person name="Masuchi Y."/>
            <person name="Shizuya H."/>
            <person name="Kikuchi H."/>
        </authorList>
    </citation>
    <scope>NUCLEOTIDE SEQUENCE [LARGE SCALE GENOMIC DNA]</scope>
    <source>
        <strain>ATCC 700860 / DSM 12428 / JCM 9974 / NBRC 100139 / OT-3</strain>
    </source>
</reference>
<reference key="2">
    <citation type="submission" date="2005-08" db="PDB data bank">
        <title>Crystal structure of PH1033 from Pyrococcus horikoshii OT3.</title>
        <authorList>
            <consortium name="RIKEN structural genomics initiative (RSGI)"/>
        </authorList>
    </citation>
    <scope>X-RAY CRYSTALLOGRAPHY (2.2 ANGSTROMS)</scope>
</reference>
<organism>
    <name type="scientific">Pyrococcus horikoshii (strain ATCC 700860 / DSM 12428 / JCM 9974 / NBRC 100139 / OT-3)</name>
    <dbReference type="NCBI Taxonomy" id="70601"/>
    <lineage>
        <taxon>Archaea</taxon>
        <taxon>Methanobacteriati</taxon>
        <taxon>Methanobacteriota</taxon>
        <taxon>Thermococci</taxon>
        <taxon>Thermococcales</taxon>
        <taxon>Thermococcaceae</taxon>
        <taxon>Pyrococcus</taxon>
    </lineage>
</organism>
<evidence type="ECO:0000255" key="1">
    <source>
        <dbReference type="HAMAP-Rule" id="MF_00771"/>
    </source>
</evidence>
<evidence type="ECO:0007829" key="2">
    <source>
        <dbReference type="PDB" id="2HD9"/>
    </source>
</evidence>